<name>DAP2_YEAST</name>
<feature type="chain" id="PRO_0000122421" description="Dipeptidyl aminopeptidase B">
    <location>
        <begin position="1"/>
        <end position="818"/>
    </location>
</feature>
<feature type="topological domain" description="Cytoplasmic" evidence="1">
    <location>
        <begin position="1"/>
        <end position="29"/>
    </location>
</feature>
<feature type="transmembrane region" description="Helical; Signal-anchor for type II membrane protein" evidence="1">
    <location>
        <begin position="30"/>
        <end position="45"/>
    </location>
</feature>
<feature type="topological domain" description="Lumenal" evidence="1">
    <location>
        <begin position="46"/>
        <end position="818"/>
    </location>
</feature>
<feature type="active site" description="Charge relay system" evidence="2">
    <location>
        <position position="679"/>
    </location>
</feature>
<feature type="active site" description="Charge relay system" evidence="2">
    <location>
        <position position="756"/>
    </location>
</feature>
<feature type="active site" description="Charge relay system" evidence="2">
    <location>
        <position position="789"/>
    </location>
</feature>
<feature type="glycosylation site" description="N-linked (GlcNAc...) asparagine" evidence="1">
    <location>
        <position position="63"/>
    </location>
</feature>
<feature type="glycosylation site" description="N-linked (GlcNAc...) asparagine" evidence="1">
    <location>
        <position position="79"/>
    </location>
</feature>
<feature type="glycosylation site" description="N-linked (GlcNAc...) asparagine" evidence="1">
    <location>
        <position position="110"/>
    </location>
</feature>
<feature type="glycosylation site" description="N-linked (GlcNAc...) asparagine" evidence="1">
    <location>
        <position position="139"/>
    </location>
</feature>
<feature type="glycosylation site" description="N-linked (GlcNAc...) asparagine" evidence="1">
    <location>
        <position position="372"/>
    </location>
</feature>
<feature type="glycosylation site" description="N-linked (GlcNAc...) asparagine" evidence="1">
    <location>
        <position position="392"/>
    </location>
</feature>
<feature type="glycosylation site" description="N-linked (GlcNAc...) asparagine" evidence="1">
    <location>
        <position position="421"/>
    </location>
</feature>
<feature type="glycosylation site" description="N-linked (GlcNAc...) asparagine" evidence="1">
    <location>
        <position position="738"/>
    </location>
</feature>
<feature type="sequence conflict" description="In Ref. 1; CAA33512." evidence="3" ref="1">
    <original>Q</original>
    <variation>H</variation>
    <location>
        <position position="83"/>
    </location>
</feature>
<feature type="sequence conflict" description="In Ref. 1; CAA33512." evidence="3" ref="1">
    <original>S</original>
    <variation>N</variation>
    <location>
        <position position="125"/>
    </location>
</feature>
<feature type="sequence conflict" description="In Ref. 1; CAA33512." evidence="3" ref="1">
    <original>FEEIGNE</original>
    <variation>LRRLET</variation>
    <location>
        <begin position="182"/>
        <end position="188"/>
    </location>
</feature>
<feature type="sequence conflict" description="In Ref. 1; CAA33512." evidence="3" ref="1">
    <original>D</original>
    <variation>N</variation>
    <location>
        <position position="200"/>
    </location>
</feature>
<feature type="sequence conflict" description="In Ref. 4; AAU09739." evidence="3" ref="4">
    <original>H</original>
    <variation>R</variation>
    <location>
        <position position="318"/>
    </location>
</feature>
<feature type="sequence conflict" description="In Ref. 1; CAA33512." evidence="3" ref="1">
    <original>TSNVVRNESS</original>
    <variation>DFKRGKERKF</variation>
    <location>
        <begin position="366"/>
        <end position="375"/>
    </location>
</feature>
<feature type="sequence conflict" description="In Ref. 1; CAA33512." evidence="3" ref="1">
    <original>AKRAFDGQFVK</original>
    <variation>QSVLSMGNLTNELTIYSSSHRDIHKTFSYLHTMYI</variation>
    <location>
        <begin position="808"/>
        <end position="818"/>
    </location>
</feature>
<feature type="helix" evidence="4">
    <location>
        <begin position="34"/>
        <end position="37"/>
    </location>
</feature>
<feature type="turn" evidence="4">
    <location>
        <begin position="38"/>
        <end position="41"/>
    </location>
</feature>
<feature type="helix" evidence="4">
    <location>
        <begin position="42"/>
        <end position="47"/>
    </location>
</feature>
<dbReference type="EC" id="3.4.14.-"/>
<dbReference type="EMBL" id="X15484">
    <property type="protein sequence ID" value="CAA33512.1"/>
    <property type="molecule type" value="Genomic_DNA"/>
</dbReference>
<dbReference type="EMBL" id="U10399">
    <property type="protein sequence ID" value="AAB68879.1"/>
    <property type="molecule type" value="Genomic_DNA"/>
</dbReference>
<dbReference type="EMBL" id="AY723822">
    <property type="protein sequence ID" value="AAU09739.1"/>
    <property type="molecule type" value="Genomic_DNA"/>
</dbReference>
<dbReference type="EMBL" id="BK006934">
    <property type="protein sequence ID" value="DAA06719.1"/>
    <property type="molecule type" value="Genomic_DNA"/>
</dbReference>
<dbReference type="PIR" id="S46780">
    <property type="entry name" value="A30107"/>
</dbReference>
<dbReference type="RefSeq" id="NP_011893.1">
    <property type="nucleotide sequence ID" value="NM_001179158.1"/>
</dbReference>
<dbReference type="PDB" id="3KL4">
    <property type="method" value="X-ray"/>
    <property type="resolution" value="3.50 A"/>
    <property type="chains" value="B=26-51"/>
</dbReference>
<dbReference type="PDB" id="3ZN8">
    <property type="method" value="EM"/>
    <property type="resolution" value="12.00 A"/>
    <property type="chains" value="S=31-44"/>
</dbReference>
<dbReference type="PDB" id="7OBR">
    <property type="method" value="EM"/>
    <property type="resolution" value="2.80 A"/>
    <property type="chains" value="s=24-90"/>
</dbReference>
<dbReference type="PDBsum" id="3KL4"/>
<dbReference type="PDBsum" id="3ZN8"/>
<dbReference type="PDBsum" id="7OBR"/>
<dbReference type="EMDB" id="EMD-12801"/>
<dbReference type="EMDB" id="EMD-2316"/>
<dbReference type="SMR" id="P18962"/>
<dbReference type="BioGRID" id="36459">
    <property type="interactions" value="87"/>
</dbReference>
<dbReference type="DIP" id="DIP-5759N"/>
<dbReference type="FunCoup" id="P18962">
    <property type="interactions" value="396"/>
</dbReference>
<dbReference type="STRING" id="4932.YHR028C"/>
<dbReference type="ESTHER" id="yeast-dap2">
    <property type="family name" value="DPP4N_Peptidase_S9"/>
</dbReference>
<dbReference type="MEROPS" id="S09.006"/>
<dbReference type="GlyCosmos" id="P18962">
    <property type="glycosylation" value="8 sites, No reported glycans"/>
</dbReference>
<dbReference type="GlyGen" id="P18962">
    <property type="glycosylation" value="8 sites"/>
</dbReference>
<dbReference type="iPTMnet" id="P18962"/>
<dbReference type="PaxDb" id="4932-YHR028C"/>
<dbReference type="PeptideAtlas" id="P18962"/>
<dbReference type="EnsemblFungi" id="YHR028C_mRNA">
    <property type="protein sequence ID" value="YHR028C"/>
    <property type="gene ID" value="YHR028C"/>
</dbReference>
<dbReference type="GeneID" id="856423"/>
<dbReference type="KEGG" id="sce:YHR028C"/>
<dbReference type="AGR" id="SGD:S000001070"/>
<dbReference type="SGD" id="S000001070">
    <property type="gene designation" value="DAP2"/>
</dbReference>
<dbReference type="VEuPathDB" id="FungiDB:YHR028C"/>
<dbReference type="eggNOG" id="KOG2100">
    <property type="taxonomic scope" value="Eukaryota"/>
</dbReference>
<dbReference type="GeneTree" id="ENSGT00940000161291"/>
<dbReference type="HOGENOM" id="CLU_006105_0_1_1"/>
<dbReference type="InParanoid" id="P18962"/>
<dbReference type="OMA" id="MRTPQEN"/>
<dbReference type="OrthoDB" id="16520at2759"/>
<dbReference type="BioCyc" id="YEAST:G3O-31088-MONOMER"/>
<dbReference type="Reactome" id="R-SCE-381771">
    <property type="pathway name" value="Synthesis, secretion, and inactivation of Glucagon-like Peptide-1 (GLP-1)"/>
</dbReference>
<dbReference type="BioGRID-ORCS" id="856423">
    <property type="hits" value="1 hit in 10 CRISPR screens"/>
</dbReference>
<dbReference type="EvolutionaryTrace" id="P18962"/>
<dbReference type="PRO" id="PR:P18962"/>
<dbReference type="Proteomes" id="UP000002311">
    <property type="component" value="Chromosome VIII"/>
</dbReference>
<dbReference type="RNAct" id="P18962">
    <property type="molecule type" value="protein"/>
</dbReference>
<dbReference type="GO" id="GO:0000329">
    <property type="term" value="C:fungal-type vacuole membrane"/>
    <property type="evidence" value="ECO:0000314"/>
    <property type="project" value="SGD"/>
</dbReference>
<dbReference type="GO" id="GO:0005886">
    <property type="term" value="C:plasma membrane"/>
    <property type="evidence" value="ECO:0000318"/>
    <property type="project" value="GO_Central"/>
</dbReference>
<dbReference type="GO" id="GO:0004177">
    <property type="term" value="F:aminopeptidase activity"/>
    <property type="evidence" value="ECO:0007669"/>
    <property type="project" value="UniProtKB-KW"/>
</dbReference>
<dbReference type="GO" id="GO:0008239">
    <property type="term" value="F:dipeptidyl-peptidase activity"/>
    <property type="evidence" value="ECO:0000314"/>
    <property type="project" value="SGD"/>
</dbReference>
<dbReference type="GO" id="GO:0004252">
    <property type="term" value="F:serine-type endopeptidase activity"/>
    <property type="evidence" value="ECO:0007669"/>
    <property type="project" value="InterPro"/>
</dbReference>
<dbReference type="GO" id="GO:0016485">
    <property type="term" value="P:protein processing"/>
    <property type="evidence" value="ECO:0000250"/>
    <property type="project" value="SGD"/>
</dbReference>
<dbReference type="GO" id="GO:0006508">
    <property type="term" value="P:proteolysis"/>
    <property type="evidence" value="ECO:0000318"/>
    <property type="project" value="GO_Central"/>
</dbReference>
<dbReference type="FunFam" id="3.40.50.1820:FF:000003">
    <property type="entry name" value="Dipeptidyl peptidase 4"/>
    <property type="match status" value="1"/>
</dbReference>
<dbReference type="Gene3D" id="3.40.50.1820">
    <property type="entry name" value="alpha/beta hydrolase"/>
    <property type="match status" value="1"/>
</dbReference>
<dbReference type="Gene3D" id="2.140.10.30">
    <property type="entry name" value="Dipeptidylpeptidase IV, N-terminal domain"/>
    <property type="match status" value="1"/>
</dbReference>
<dbReference type="InterPro" id="IPR029058">
    <property type="entry name" value="AB_hydrolase_fold"/>
</dbReference>
<dbReference type="InterPro" id="IPR002471">
    <property type="entry name" value="Pept_S9_AS"/>
</dbReference>
<dbReference type="InterPro" id="IPR001375">
    <property type="entry name" value="Peptidase_S9_cat"/>
</dbReference>
<dbReference type="InterPro" id="IPR002469">
    <property type="entry name" value="Peptidase_S9B_N"/>
</dbReference>
<dbReference type="InterPro" id="IPR050278">
    <property type="entry name" value="Serine_Prot_S9B/DPPIV"/>
</dbReference>
<dbReference type="PANTHER" id="PTHR11731:SF200">
    <property type="entry name" value="DIPEPTIDYL PEPTIDASE 10, ISOFORM B"/>
    <property type="match status" value="1"/>
</dbReference>
<dbReference type="PANTHER" id="PTHR11731">
    <property type="entry name" value="PROTEASE FAMILY S9B,C DIPEPTIDYL-PEPTIDASE IV-RELATED"/>
    <property type="match status" value="1"/>
</dbReference>
<dbReference type="Pfam" id="PF00930">
    <property type="entry name" value="DPPIV_N"/>
    <property type="match status" value="1"/>
</dbReference>
<dbReference type="Pfam" id="PF00326">
    <property type="entry name" value="Peptidase_S9"/>
    <property type="match status" value="1"/>
</dbReference>
<dbReference type="SUPFAM" id="SSF53474">
    <property type="entry name" value="alpha/beta-Hydrolases"/>
    <property type="match status" value="1"/>
</dbReference>
<dbReference type="SUPFAM" id="SSF82171">
    <property type="entry name" value="DPP6 N-terminal domain-like"/>
    <property type="match status" value="1"/>
</dbReference>
<dbReference type="PROSITE" id="PS00708">
    <property type="entry name" value="PRO_ENDOPEP_SER"/>
    <property type="match status" value="1"/>
</dbReference>
<proteinExistence type="evidence at protein level"/>
<sequence length="818" mass="93404">MEGGEEEVERIPDELFDTKKKHLLDKLIRVGIILVLLIWGTVLLLKSIPHHSNTPDYQEPNSNYTNDGKLKVSFSVVRNNTFQPKYHELQWISDNKIESNDLGLYVTFMNDSYVVKSVYDDSYNSVLLEGKTFIHNGQNLTVESITASPDLKRLLIRTNSVQNWRHSTFGSYFVYDKSSSSFEEIGNEVALAIWSPNSNDIAYVQDNNIYIYSAISKKTIRAVTNDGSSFLFNGKPDWVYEEEVFEDDKAAWWSPTGDYLAFLKIDESEVGEFIIPYYVQDEKDIYPEMRSIKYPKSGTPNPHAELWVYSMKDGTSFHPRISGNKKDGSLLITEVTWVGNGNVLVKTTDRSSDILTVFLIDTIAKTSNVVRNESSNGGWWEITHNTLFIPANETFDRPHNGYVDILPIGGYNHLAYFENSNSSHYKTLTEGKWEVVNGPLAFDSMENRLYFISTRKSSTERHVYYIDLRSPNEIIEVTDTSEDGVYDVSFSSGRRFGLLTYKGPKVPYQKIVDFHSRKAEKCDKGNVLGKSLYHLEKNEVLTKILEDYAVPRKSFRELNLGKDEFGKDILVNSYEILPNDFDETLSDHYPVFFFAYGGPNSQQVVKTFSVGFNEVVASQLNAIVVVVDGRGTGFKGQDFRSLVRDRLGDYEARDQISAASLYGSLTFVDPQKISLFGWSYGGYLTLKTLEKDGGRHFKYGMSVAPVTDWRFYDSVYTERYMHTPQENFDGYVESSVHNVTALAQANRFLLMHGTGDDNVHFQNSLKFLDLLDLNGVENYDVHVFPDSDHSIRYHNANVIVFDKLLDWAKRAFDGQFVK</sequence>
<reference key="1">
    <citation type="journal article" date="1989" name="J. Cell Biol.">
        <title>Structure, biosynthesis, and localization of dipeptidyl aminopeptidase B, an integral membrane glycoprotein of the yeast vacuole.</title>
        <authorList>
            <person name="Roberts C.J."/>
            <person name="Pohlig G."/>
            <person name="Rothman J.H."/>
            <person name="Stevens T.H."/>
        </authorList>
    </citation>
    <scope>NUCLEOTIDE SEQUENCE [GENOMIC DNA]</scope>
</reference>
<reference key="2">
    <citation type="journal article" date="1994" name="Science">
        <title>Complete nucleotide sequence of Saccharomyces cerevisiae chromosome VIII.</title>
        <authorList>
            <person name="Johnston M."/>
            <person name="Andrews S."/>
            <person name="Brinkman R."/>
            <person name="Cooper J."/>
            <person name="Ding H."/>
            <person name="Dover J."/>
            <person name="Du Z."/>
            <person name="Favello A."/>
            <person name="Fulton L."/>
            <person name="Gattung S."/>
            <person name="Geisel C."/>
            <person name="Kirsten J."/>
            <person name="Kucaba T."/>
            <person name="Hillier L.W."/>
            <person name="Jier M."/>
            <person name="Johnston L."/>
            <person name="Langston Y."/>
            <person name="Latreille P."/>
            <person name="Louis E.J."/>
            <person name="Macri C."/>
            <person name="Mardis E."/>
            <person name="Menezes S."/>
            <person name="Mouser L."/>
            <person name="Nhan M."/>
            <person name="Rifkin L."/>
            <person name="Riles L."/>
            <person name="St Peter H."/>
            <person name="Trevaskis E."/>
            <person name="Vaughan K."/>
            <person name="Vignati D."/>
            <person name="Wilcox L."/>
            <person name="Wohldman P."/>
            <person name="Waterston R."/>
            <person name="Wilson R."/>
            <person name="Vaudin M."/>
        </authorList>
    </citation>
    <scope>NUCLEOTIDE SEQUENCE [LARGE SCALE GENOMIC DNA]</scope>
    <source>
        <strain>ATCC 204508 / S288c</strain>
    </source>
</reference>
<reference key="3">
    <citation type="journal article" date="2014" name="G3 (Bethesda)">
        <title>The reference genome sequence of Saccharomyces cerevisiae: Then and now.</title>
        <authorList>
            <person name="Engel S.R."/>
            <person name="Dietrich F.S."/>
            <person name="Fisk D.G."/>
            <person name="Binkley G."/>
            <person name="Balakrishnan R."/>
            <person name="Costanzo M.C."/>
            <person name="Dwight S.S."/>
            <person name="Hitz B.C."/>
            <person name="Karra K."/>
            <person name="Nash R.S."/>
            <person name="Weng S."/>
            <person name="Wong E.D."/>
            <person name="Lloyd P."/>
            <person name="Skrzypek M.S."/>
            <person name="Miyasato S.R."/>
            <person name="Simison M."/>
            <person name="Cherry J.M."/>
        </authorList>
    </citation>
    <scope>GENOME REANNOTATION</scope>
    <source>
        <strain>ATCC 204508 / S288c</strain>
    </source>
</reference>
<reference key="4">
    <citation type="journal article" date="2007" name="Genome Res.">
        <title>Approaching a complete repository of sequence-verified protein-encoding clones for Saccharomyces cerevisiae.</title>
        <authorList>
            <person name="Hu Y."/>
            <person name="Rolfs A."/>
            <person name="Bhullar B."/>
            <person name="Murthy T.V.S."/>
            <person name="Zhu C."/>
            <person name="Berger M.F."/>
            <person name="Camargo A.A."/>
            <person name="Kelley F."/>
            <person name="McCarron S."/>
            <person name="Jepson D."/>
            <person name="Richardson A."/>
            <person name="Raphael J."/>
            <person name="Moreira D."/>
            <person name="Taycher E."/>
            <person name="Zuo D."/>
            <person name="Mohr S."/>
            <person name="Kane M.F."/>
            <person name="Williamson J."/>
            <person name="Simpson A.J.G."/>
            <person name="Bulyk M.L."/>
            <person name="Harlow E."/>
            <person name="Marsischky G."/>
            <person name="Kolodner R.D."/>
            <person name="LaBaer J."/>
        </authorList>
    </citation>
    <scope>NUCLEOTIDE SEQUENCE [GENOMIC DNA]</scope>
    <source>
        <strain>ATCC 204508 / S288c</strain>
    </source>
</reference>
<reference key="5">
    <citation type="journal article" date="2012" name="Proc. Natl. Acad. Sci. U.S.A.">
        <title>N-terminal acetylome analyses and functional insights of the N-terminal acetyltransferase NatB.</title>
        <authorList>
            <person name="Van Damme P."/>
            <person name="Lasa M."/>
            <person name="Polevoda B."/>
            <person name="Gazquez C."/>
            <person name="Elosegui-Artola A."/>
            <person name="Kim D.S."/>
            <person name="De Juan-Pardo E."/>
            <person name="Demeyer K."/>
            <person name="Hole K."/>
            <person name="Larrea E."/>
            <person name="Timmerman E."/>
            <person name="Prieto J."/>
            <person name="Arnesen T."/>
            <person name="Sherman F."/>
            <person name="Gevaert K."/>
            <person name="Aldabe R."/>
        </authorList>
    </citation>
    <scope>IDENTIFICATION BY MASS SPECTROMETRY [LARGE SCALE ANALYSIS]</scope>
</reference>
<protein>
    <recommendedName>
        <fullName>Dipeptidyl aminopeptidase B</fullName>
        <shortName>DPAP B</shortName>
        <ecNumber>3.4.14.-</ecNumber>
    </recommendedName>
    <alternativeName>
        <fullName>YSCV</fullName>
    </alternativeName>
</protein>
<gene>
    <name type="primary">DAP2</name>
    <name type="ordered locus">YHR028C</name>
</gene>
<organism>
    <name type="scientific">Saccharomyces cerevisiae (strain ATCC 204508 / S288c)</name>
    <name type="common">Baker's yeast</name>
    <dbReference type="NCBI Taxonomy" id="559292"/>
    <lineage>
        <taxon>Eukaryota</taxon>
        <taxon>Fungi</taxon>
        <taxon>Dikarya</taxon>
        <taxon>Ascomycota</taxon>
        <taxon>Saccharomycotina</taxon>
        <taxon>Saccharomycetes</taxon>
        <taxon>Saccharomycetales</taxon>
        <taxon>Saccharomycetaceae</taxon>
        <taxon>Saccharomyces</taxon>
    </lineage>
</organism>
<keyword id="KW-0002">3D-structure</keyword>
<keyword id="KW-0031">Aminopeptidase</keyword>
<keyword id="KW-0325">Glycoprotein</keyword>
<keyword id="KW-0378">Hydrolase</keyword>
<keyword id="KW-0472">Membrane</keyword>
<keyword id="KW-0645">Protease</keyword>
<keyword id="KW-1185">Reference proteome</keyword>
<keyword id="KW-0720">Serine protease</keyword>
<keyword id="KW-0735">Signal-anchor</keyword>
<keyword id="KW-0812">Transmembrane</keyword>
<keyword id="KW-1133">Transmembrane helix</keyword>
<keyword id="KW-0926">Vacuole</keyword>
<comment type="subcellular location">
    <subcellularLocation>
        <location>Vacuole membrane</location>
        <topology>Single-pass type II membrane protein</topology>
    </subcellularLocation>
    <text>Lysosome-like vacuoles.</text>
</comment>
<comment type="similarity">
    <text evidence="3">Belongs to the peptidase S9B family.</text>
</comment>
<accession>P18962</accession>
<accession>D3DKX5</accession>
<accession>E9P957</accession>
<evidence type="ECO:0000255" key="1"/>
<evidence type="ECO:0000255" key="2">
    <source>
        <dbReference type="PROSITE-ProRule" id="PRU10084"/>
    </source>
</evidence>
<evidence type="ECO:0000305" key="3"/>
<evidence type="ECO:0007829" key="4">
    <source>
        <dbReference type="PDB" id="3KL4"/>
    </source>
</evidence>